<accession>Q62120</accession>
<accession>G5E852</accession>
<accession>Q62124</accession>
<accession>Q7TQD0</accession>
<comment type="function">
    <text evidence="2 8 13 15 16 19 20 21 23 24">Non-receptor tyrosine kinase involved in various processes such as cell growth, development, differentiation or histone modifications. Mediates essential signaling events in both innate and adaptive immunity. In the cytoplasm, plays a pivotal role in signal transduction via its association with type I receptors such as growth hormone (GHR), prolactin (PRLR), leptin (LEPR), erythropoietin (EPOR), thrombopoietin receptor (MPL/TPOR); or type II receptors including IFN-alpha, IFN-beta, IFN-gamma and multiple interleukins. Following ligand-binding to cell surface receptors, phosphorylates specific tyrosine residues on the cytoplasmic tails of the receptor, creating docking sites for STATs proteins. Subsequently, phosphorylates the STATs proteins once they are recruited to the receptor. Phosphorylated STATs then form homodimer or heterodimers and translocate to the nucleus to activate gene transcription. For example, cell stimulation with erythropoietin (EPO) during erythropoiesis leads to JAK2 autophosphorylation, activation, and its association with erythropoietin receptor (EPOR) that becomes phosphorylated in its cytoplasmic domain. Then, STAT5 (STAT5A or STAT5B) is recruited, phosphorylated and activated by JAK2. Once activated, dimerized STAT5 translocates into the nucleus and promotes the transcription of several essential genes involved in the modulation of erythropoiesis. Part of a signaling cascade that is activated by increased cellular retinol and that leads to the activation of STAT5 (STAT5A or STAT5B). In addition, JAK2 mediates angiotensin-2-induced ARHGEF1 phosphorylation. Plays a role in cell cycle by phosphorylating CDKN1B. Cooperates with TEC through reciprocal phosphorylation to mediate cytokine-driven activation of FOS transcription. In the nucleus, plays a key role in chromatin by specifically mediating phosphorylation of 'Tyr-41' of histone H3 (H3Y41ph), a specific tag that promotes exclusion of CBX5 (HP1 alpha) from chromatin. Up-regulates the potassium voltage-gated channel activity of KCNA3 (By similarity).</text>
</comment>
<comment type="catalytic activity">
    <reaction evidence="6 14 17">
        <text>L-tyrosyl-[protein] + ATP = O-phospho-L-tyrosyl-[protein] + ADP + H(+)</text>
        <dbReference type="Rhea" id="RHEA:10596"/>
        <dbReference type="Rhea" id="RHEA-COMP:10136"/>
        <dbReference type="Rhea" id="RHEA-COMP:20101"/>
        <dbReference type="ChEBI" id="CHEBI:15378"/>
        <dbReference type="ChEBI" id="CHEBI:30616"/>
        <dbReference type="ChEBI" id="CHEBI:46858"/>
        <dbReference type="ChEBI" id="CHEBI:61978"/>
        <dbReference type="ChEBI" id="CHEBI:456216"/>
        <dbReference type="EC" id="2.7.10.2"/>
    </reaction>
</comment>
<comment type="cofactor">
    <cofactor evidence="25">
        <name>Mg(2+)</name>
        <dbReference type="ChEBI" id="CHEBI:18420"/>
    </cofactor>
    <text evidence="25">Mn(2+) was used in the in vitro kinase assay but Mg(2+) is likely to be the in vivo cofactor.</text>
</comment>
<comment type="activity regulation">
    <text evidence="2 14 17 26">Regulated by autophosphorylation, can both activate or decrease activity (PubMed:20304997, PubMed:21726629, PubMed:8343951). Heme regulates its activity by enhancing the phosphorylation on Tyr-1007 and Tyr-1008 (By similarity).</text>
</comment>
<comment type="subunit">
    <text evidence="2 7 8 9 10 12 18 19 21 22">Interacts with IL23R, SKB1 and STAM2 (By similarity). Interacts with EPOR (PubMed:11779507, PubMed:8343951). Interacts with LYN (PubMed:9573010). Interacts with SIRPA (PubMed:10842184). Interacts with SH2B1 (PubMed:16824542, PubMed:17565041). Interacts with TEC (PubMed:9473212). Interacts with IFNGR2 (via intracellular domain) (By similarity). Interacts with LEPR (Isoform B) (PubMed:11923481). Interacts with HSP90AB1; promotes functional activation in a heat shock-dependent manner. Interacts with STRA6 (By similarity). Interacts with ASB2; the interaction targets JAK2 for Notch-induced proteasomal degradation (By similarity). Interacts with MPL/TPOR (By similarity).</text>
</comment>
<comment type="interaction">
    <interactant intactId="EBI-646604">
        <id>Q62120</id>
    </interactant>
    <interactant intactId="EBI-617901">
        <id>P14753</id>
        <label>Epor</label>
    </interactant>
    <organismsDiffer>false</organismsDiffer>
    <experiments>4</experiments>
</comment>
<comment type="interaction">
    <interactant intactId="EBI-646604">
        <id>Q62120</id>
    </interactant>
    <interactant intactId="EBI-9306159">
        <id>P20491</id>
        <label>Fcer1g</label>
    </interactant>
    <organismsDiffer>false</organismsDiffer>
    <experiments>2</experiments>
</comment>
<comment type="interaction">
    <interactant intactId="EBI-646604">
        <id>Q62120</id>
    </interactant>
    <interactant intactId="EBI-2257257">
        <id>P48356</id>
        <label>Lepr</label>
    </interactant>
    <organismsDiffer>false</organismsDiffer>
    <experiments>3</experiments>
</comment>
<comment type="interaction">
    <interactant intactId="EBI-646604">
        <id>Q62120</id>
    </interactant>
    <interactant intactId="EBI-7178606">
        <id>Q91ZM2</id>
        <label>Sh2b1</label>
    </interactant>
    <organismsDiffer>false</organismsDiffer>
    <experiments>3</experiments>
</comment>
<comment type="interaction">
    <interactant intactId="EBI-646604">
        <id>Q62120</id>
    </interactant>
    <interactant intactId="EBI-519280">
        <id>P46527</id>
        <label>CDKN1B</label>
    </interactant>
    <organismsDiffer>true</organismsDiffer>
    <experiments>7</experiments>
</comment>
<comment type="interaction">
    <interactant intactId="EBI-646604">
        <id>Q62120</id>
    </interactant>
    <interactant intactId="EBI-10248005">
        <id>Q5VWK5</id>
        <label>IL23R</label>
    </interactant>
    <organismsDiffer>true</organismsDiffer>
    <experiments>2</experiments>
</comment>
<comment type="interaction">
    <interactant intactId="EBI-646604">
        <id>Q62120</id>
    </interactant>
    <interactant intactId="EBI-520788">
        <id>P10686</id>
        <label>Plcg1</label>
    </interactant>
    <organismsDiffer>true</organismsDiffer>
    <experiments>3</experiments>
</comment>
<comment type="interaction">
    <interactant intactId="EBI-646604">
        <id>Q62120</id>
    </interactant>
    <interactant intactId="EBI-78835">
        <id>P29353</id>
        <label>SHC1</label>
    </interactant>
    <organismsDiffer>true</organismsDiffer>
    <experiments>2</experiments>
</comment>
<comment type="subcellular location">
    <subcellularLocation>
        <location>Endomembrane system</location>
        <topology>Peripheral membrane protein</topology>
    </subcellularLocation>
    <subcellularLocation>
        <location evidence="1">Cytoplasm</location>
    </subcellularLocation>
    <subcellularLocation>
        <location evidence="1">Nucleus</location>
    </subcellularLocation>
</comment>
<comment type="tissue specificity">
    <text>Ubiquitously expressed throughout most tissues.</text>
</comment>
<comment type="domain">
    <text>Possesses 2 protein kinase domains. The second one probably contains the catalytic domain, while the presence of slight differences suggest a different role for protein kinase 1.</text>
</comment>
<comment type="PTM">
    <text evidence="2 10 11 12 14 15 17 19 21">Autophosphorylated, leading to regulate its activity. Leptin promotes phosphorylation on tyrosine residues, including phosphorylation on Tyr-813 (PubMed:16824542, PubMed:17565041). Autophosphorylation on Tyr-119 in response to EPO down-regulates its kinase activity (PubMed:17024180). Autophosphorylation on Tyr-868, Tyr-966 and Tyr-972 in response to growth hormone (GH) are required for maximal kinase activity (PubMed:20304997). Also phosphorylated by TEC (PubMed:9473212). Phosphorylated on tyrosine residues in response to interferon gamma signaling (By similarity). Phosphorylated on tyrosine residues in response to a signaling cascade that is activated by increased cellular retinol (PubMed:21368206).</text>
</comment>
<comment type="PTM">
    <text evidence="2">Undergoes Notch-induced ubiquitination and subsequent proteasomal degradation which is mediated by ASB1 or ASB2, the substrate-recognition components of probable ECS E3 ubiquitin-protein ligase complexes.</text>
</comment>
<comment type="disruption phenotype">
    <text evidence="23 24">Embryos are anemic and die around day 12.5 post-coitum (dpc). Primitive erythrocytes are found, but definitive erythropoiesis is absent. Fetal liver myeloid progenitors, although present based on the expression of lineage specific markers, fail to respond to erythropoietin (Epo), thrombopoietin (Thpo), interleukin-3 (Il3), or granulocyte and macrophage colony-stimulating factor 1 (Csf1 and Csf2). Fetal liver BFU-E and CFU-E colonies are completely absent. However, multilineage hematopoietic stem cells (CD34(low), c-kit(pos)) can be found, and B-lymphopoiesis appears intact.</text>
</comment>
<comment type="similarity">
    <text evidence="4">Belongs to the protein kinase superfamily. Tyr protein kinase family. JAK subfamily.</text>
</comment>
<comment type="sequence caution" evidence="25">
    <conflict type="frameshift">
        <sequence resource="EMBL-CDS" id="AAB41327"/>
    </conflict>
</comment>
<feature type="chain" id="PRO_0000088113" description="Tyrosine-protein kinase JAK2">
    <location>
        <begin position="1"/>
        <end position="1132"/>
    </location>
</feature>
<feature type="domain" description="FERM" evidence="3">
    <location>
        <begin position="37"/>
        <end position="380"/>
    </location>
</feature>
<feature type="domain" description="SH2; atypical" evidence="5">
    <location>
        <begin position="401"/>
        <end position="482"/>
    </location>
</feature>
<feature type="domain" description="Protein kinase 1" evidence="4">
    <location>
        <begin position="545"/>
        <end position="809"/>
    </location>
</feature>
<feature type="domain" description="Protein kinase 2" evidence="4">
    <location>
        <begin position="849"/>
        <end position="1124"/>
    </location>
</feature>
<feature type="region of interest" description="Interaction with cytokine/interferon/growth hormone receptors">
    <location>
        <begin position="1"/>
        <end position="239"/>
    </location>
</feature>
<feature type="active site" description="Proton acceptor" evidence="4 6">
    <location>
        <position position="976"/>
    </location>
</feature>
<feature type="binding site" evidence="4">
    <location>
        <begin position="855"/>
        <end position="863"/>
    </location>
    <ligand>
        <name>ATP</name>
        <dbReference type="ChEBI" id="CHEBI:30616"/>
    </ligand>
</feature>
<feature type="binding site" evidence="4">
    <location>
        <position position="882"/>
    </location>
    <ligand>
        <name>ATP</name>
        <dbReference type="ChEBI" id="CHEBI:30616"/>
    </ligand>
</feature>
<feature type="modified residue" description="Phosphotyrosine; by autocatalysis" evidence="11">
    <location>
        <position position="119"/>
    </location>
</feature>
<feature type="modified residue" description="Phosphotyrosine" evidence="17">
    <location>
        <position position="372"/>
    </location>
</feature>
<feature type="modified residue" description="Phosphotyrosine" evidence="17">
    <location>
        <position position="373"/>
    </location>
</feature>
<feature type="modified residue" description="Phosphoserine" evidence="28 29">
    <location>
        <position position="523"/>
    </location>
</feature>
<feature type="modified residue" description="Phosphotyrosine" evidence="2">
    <location>
        <position position="570"/>
    </location>
</feature>
<feature type="modified residue" description="Phosphotyrosine" evidence="10 12">
    <location>
        <position position="813"/>
    </location>
</feature>
<feature type="modified residue" description="Phosphotyrosine; by autocatalysis" evidence="14">
    <location>
        <position position="868"/>
    </location>
</feature>
<feature type="modified residue" description="Phosphotyrosine; by autocatalysis" evidence="14">
    <location>
        <position position="966"/>
    </location>
</feature>
<feature type="modified residue" description="Phosphotyrosine; by autocatalysis" evidence="14">
    <location>
        <position position="972"/>
    </location>
</feature>
<feature type="modified residue" description="Phosphotyrosine; by autocatalysis" evidence="21">
    <location>
        <position position="1007"/>
    </location>
</feature>
<feature type="modified residue" description="Phosphotyrosine; by autocatalysis" evidence="14">
    <location>
        <position position="1008"/>
    </location>
</feature>
<feature type="mutagenesis site" description="Phosphorylation mimic mutant, leads to dissociation of JAK2 from the erythropoietin receptor complex." evidence="11">
    <original>Y</original>
    <variation>E</variation>
    <location>
        <position position="119"/>
    </location>
</feature>
<feature type="mutagenesis site" description="More stably associated with the erythropoietin receptor complex." evidence="11">
    <original>Y</original>
    <variation>F</variation>
    <location>
        <position position="119"/>
    </location>
</feature>
<feature type="mutagenesis site" description="About 60% loss of STAT1 phosphorylation by JAK2." evidence="17">
    <original>Y</original>
    <variation>F</variation>
    <location>
        <position position="372"/>
    </location>
</feature>
<feature type="mutagenesis site" description="Decreased the ability of JAK2 to autophosphorylate." evidence="17">
    <original>Y</original>
    <variation>F</variation>
    <location>
        <position position="373"/>
    </location>
</feature>
<feature type="mutagenesis site" description="Reduced activity in response to growth hormone." evidence="14">
    <original>Y</original>
    <variation>F</variation>
    <location>
        <position position="868"/>
    </location>
</feature>
<feature type="mutagenesis site" description="Reduced activity in response to growth hormone." evidence="14">
    <original>Y</original>
    <variation>F</variation>
    <location>
        <position position="966"/>
    </location>
</feature>
<feature type="mutagenesis site" description="Reduced activity in response to growth hormone." evidence="14">
    <original>Y</original>
    <variation>F</variation>
    <location>
        <position position="972"/>
    </location>
</feature>
<feature type="mutagenesis site" description="Affects the phosphorylation pattern." evidence="14">
    <original>Y</original>
    <variation>F</variation>
    <location>
        <position position="1008"/>
    </location>
</feature>
<feature type="sequence conflict" description="In Ref. 1; AAB41327." evidence="25" ref="1">
    <original>A</original>
    <variation>V</variation>
    <location>
        <position position="155"/>
    </location>
</feature>
<feature type="sequence conflict" description="In Ref. 1; AAB41327." evidence="25" ref="1">
    <original>K</original>
    <variation>N</variation>
    <location>
        <position position="468"/>
    </location>
</feature>
<feature type="sequence conflict" description="In Ref. 3; AAH54807/AAH59834." ref="3">
    <original>D</original>
    <variation>N</variation>
    <location>
        <position position="686"/>
    </location>
</feature>
<feature type="sequence conflict" description="In Ref. 5; AAA40014." evidence="25" ref="5">
    <original>S</original>
    <variation>R</variation>
    <location>
        <position position="1016"/>
    </location>
</feature>
<feature type="sequence conflict" description="In Ref. 1; AAB41327." evidence="25" ref="1">
    <original>E</original>
    <variation>Q</variation>
    <location>
        <position position="1024"/>
    </location>
</feature>
<feature type="sequence conflict" description="In Ref. 5; AAA40014." evidence="25" ref="5">
    <original>VV</original>
    <variation>IP</variation>
    <location>
        <begin position="1042"/>
        <end position="1043"/>
    </location>
</feature>
<sequence length="1132" mass="130595">MGMACLTMTEMEATSTSPVHQNGDIPGSANSVKQIEPVLQVYLYHSLGQAEGEYLKFPSGEYVAEEICVAASKACGITPVYHNMFALMSETERIWYPPNHVFHIDESTRHDILYRIRFYFPHWYCSGSSRTYRYGVSRGAEAPLLDDFVMSYLFAQWRHDFVHGWIKVPVTHETQEECLGMAVLDMMRIAKEKDQTPLAVYNSVSYKTFLPKCVRAKIQDYHILTRKRIRYRFRRFIQQFSQCKATARNLKLKYLINLETLQSAFYTEQFEVKESARGPSGEEIFATIIITGNGGIQWSRGKHKESETLTEQDVQLYCDFPDIIDVSIKQANQECSNESRIVTVHKQDGKVLEIELSSLKEALSFVSLIDGYYRLTADAHHYLCKEVAPPAVLENIHSNCHGPISMDFAISKLKKAGNQTGLYVLRCSPKDFNKYFLTFAVERENVIEYKHCLITKNENGEYNLSGTKRNFSNLKDLLNCYQMETVRSDSIIFQFTKCCPPKPKDKSNLLVFRTNGISDVQISPTLQRHNNVNQMVFHKIRNEDLIFNESLGQGTFTKIFKGVRREVGDYGQLHKTEVLLKVLDKAHRNYSESFFEAASMMSQLSHKHLVLNYGVCVCGEENILVQEFVKFGSLDTYLKKNKNSINILWKLGVAKQLAWAMHFLEEKSLIHGNVCAKNILLIREEDRRTGNPPFIKLSDPGISITVLPKDILQERIPWVPPECIENPKNLNLATDKWSFGTTLWEICSGGDKPLSALDSQRKLQFYEDKHQLPAPKWTELANLINNCMDYEPDFRPAFRAVIRDLNSLFTPDYELLTENDMLPNMRIGALGFSGAFEDRDPTQFEERHLKFLQQLGKGNFGSVEMCRYDPLQDNTGEVVAVKKLQHSTEEHLRDFEREIEILKSLQHDNIVKYKGVCYSAGRRNLRLIMEYLPYGSLRDYLQKHKERIDHKKLLQYTSQICKGMEYLGTKRYIHRDLATRNILVENENRVKIGDFGLTKVLPQDKEYYKVKEPGESPIFWYAPESLTESKFSVASDVWSFGVVLYELFTYIEKSKSPPVEFMRMIGNDKQGQMIVFHLIELLKSNGRLPRPEGCPDEIYVIMTECWNNNVSQRPSFRDLSLRVDQIRDSIAA</sequence>
<keyword id="KW-0002">3D-structure</keyword>
<keyword id="KW-1064">Adaptive immunity</keyword>
<keyword id="KW-0067">ATP-binding</keyword>
<keyword id="KW-0156">Chromatin regulator</keyword>
<keyword id="KW-0963">Cytoplasm</keyword>
<keyword id="KW-0391">Immunity</keyword>
<keyword id="KW-0399">Innate immunity</keyword>
<keyword id="KW-0418">Kinase</keyword>
<keyword id="KW-0460">Magnesium</keyword>
<keyword id="KW-0472">Membrane</keyword>
<keyword id="KW-0479">Metal-binding</keyword>
<keyword id="KW-0547">Nucleotide-binding</keyword>
<keyword id="KW-0539">Nucleus</keyword>
<keyword id="KW-0597">Phosphoprotein</keyword>
<keyword id="KW-1185">Reference proteome</keyword>
<keyword id="KW-0677">Repeat</keyword>
<keyword id="KW-0727">SH2 domain</keyword>
<keyword id="KW-0808">Transferase</keyword>
<keyword id="KW-0829">Tyrosine-protein kinase</keyword>
<keyword id="KW-0832">Ubl conjugation</keyword>
<protein>
    <recommendedName>
        <fullName evidence="25">Tyrosine-protein kinase JAK2</fullName>
        <ecNumber evidence="14 17">2.7.10.2</ecNumber>
    </recommendedName>
    <alternativeName>
        <fullName>Janus kinase 2</fullName>
        <shortName>JAK-2</shortName>
    </alternativeName>
</protein>
<name>JAK2_MOUSE</name>
<proteinExistence type="evidence at protein level"/>
<gene>
    <name evidence="27" type="primary">Jak2</name>
</gene>
<dbReference type="EC" id="2.7.10.2" evidence="14 17"/>
<dbReference type="EMBL" id="L16956">
    <property type="protein sequence ID" value="AAB41327.1"/>
    <property type="status" value="ALT_FRAME"/>
    <property type="molecule type" value="mRNA"/>
</dbReference>
<dbReference type="EMBL" id="AC119228">
    <property type="status" value="NOT_ANNOTATED_CDS"/>
    <property type="molecule type" value="Genomic_DNA"/>
</dbReference>
<dbReference type="EMBL" id="AC162456">
    <property type="status" value="NOT_ANNOTATED_CDS"/>
    <property type="molecule type" value="Genomic_DNA"/>
</dbReference>
<dbReference type="EMBL" id="BC054807">
    <property type="protein sequence ID" value="AAH54807.1"/>
    <property type="molecule type" value="mRNA"/>
</dbReference>
<dbReference type="EMBL" id="BC059834">
    <property type="protein sequence ID" value="AAH59834.1"/>
    <property type="molecule type" value="mRNA"/>
</dbReference>
<dbReference type="EMBL" id="M33423">
    <property type="protein sequence ID" value="AAA40014.1"/>
    <property type="molecule type" value="mRNA"/>
</dbReference>
<dbReference type="CCDS" id="CCDS37950.1"/>
<dbReference type="PIR" id="A47511">
    <property type="entry name" value="A47511"/>
</dbReference>
<dbReference type="PIR" id="B39577">
    <property type="entry name" value="B39577"/>
</dbReference>
<dbReference type="PIR" id="JH0114">
    <property type="entry name" value="JH0114"/>
</dbReference>
<dbReference type="RefSeq" id="NP_001041642.1">
    <property type="nucleotide sequence ID" value="NM_001048177.3"/>
</dbReference>
<dbReference type="RefSeq" id="NP_032439.2">
    <property type="nucleotide sequence ID" value="NM_008413.4"/>
</dbReference>
<dbReference type="RefSeq" id="XP_011245457.1">
    <property type="nucleotide sequence ID" value="XM_011247155.3"/>
</dbReference>
<dbReference type="PDB" id="2HDX">
    <property type="method" value="X-ray"/>
    <property type="resolution" value="2.35 A"/>
    <property type="chains" value="G/H/I/J/K/L=810-820"/>
</dbReference>
<dbReference type="PDB" id="4GL9">
    <property type="method" value="X-ray"/>
    <property type="resolution" value="3.90 A"/>
    <property type="chains" value="A/B/C/D=836-1129"/>
</dbReference>
<dbReference type="PDBsum" id="2HDX"/>
<dbReference type="PDBsum" id="4GL9"/>
<dbReference type="SMR" id="Q62120"/>
<dbReference type="BioGRID" id="200857">
    <property type="interactions" value="42"/>
</dbReference>
<dbReference type="ComplexPortal" id="CPX-388">
    <property type="entry name" value="Interleukin-12-receptor complex"/>
</dbReference>
<dbReference type="ComplexPortal" id="CPX-389">
    <property type="entry name" value="Interleukin-23-receptor complex"/>
</dbReference>
<dbReference type="CORUM" id="Q62120"/>
<dbReference type="DIP" id="DIP-320N"/>
<dbReference type="DIP" id="DIP-60238N"/>
<dbReference type="FunCoup" id="Q62120">
    <property type="interactions" value="2075"/>
</dbReference>
<dbReference type="IntAct" id="Q62120">
    <property type="interactions" value="26"/>
</dbReference>
<dbReference type="MINT" id="Q62120"/>
<dbReference type="STRING" id="10090.ENSMUSP00000064394"/>
<dbReference type="BindingDB" id="Q62120"/>
<dbReference type="ChEMBL" id="CHEMBL1649049"/>
<dbReference type="DrugCentral" id="Q62120"/>
<dbReference type="GlyGen" id="Q62120">
    <property type="glycosylation" value="2 sites, 2 N-linked glycans (2 sites)"/>
</dbReference>
<dbReference type="iPTMnet" id="Q62120"/>
<dbReference type="PhosphoSitePlus" id="Q62120"/>
<dbReference type="jPOST" id="Q62120"/>
<dbReference type="PaxDb" id="10090-ENSMUSP00000064394"/>
<dbReference type="ProteomicsDB" id="269116"/>
<dbReference type="ProteomicsDB" id="328792"/>
<dbReference type="Pumba" id="Q62120"/>
<dbReference type="Antibodypedia" id="24086">
    <property type="antibodies" value="1260 antibodies from 46 providers"/>
</dbReference>
<dbReference type="DNASU" id="16452"/>
<dbReference type="Ensembl" id="ENSMUST00000025705.7">
    <property type="protein sequence ID" value="ENSMUSP00000025705.7"/>
    <property type="gene ID" value="ENSMUSG00000024789.14"/>
</dbReference>
<dbReference type="Ensembl" id="ENSMUST00000065796.10">
    <property type="protein sequence ID" value="ENSMUSP00000064394.4"/>
    <property type="gene ID" value="ENSMUSG00000024789.14"/>
</dbReference>
<dbReference type="Ensembl" id="ENSMUST00000238009.2">
    <property type="protein sequence ID" value="ENSMUSP00000158242.2"/>
    <property type="gene ID" value="ENSMUSG00000024789.14"/>
</dbReference>
<dbReference type="GeneID" id="16452"/>
<dbReference type="KEGG" id="mmu:16452"/>
<dbReference type="UCSC" id="uc008hdb.2">
    <property type="organism name" value="mouse"/>
</dbReference>
<dbReference type="AGR" id="MGI:96629"/>
<dbReference type="CTD" id="3717"/>
<dbReference type="MGI" id="MGI:96629">
    <property type="gene designation" value="Jak2"/>
</dbReference>
<dbReference type="VEuPathDB" id="HostDB:ENSMUSG00000024789"/>
<dbReference type="eggNOG" id="KOG0197">
    <property type="taxonomic scope" value="Eukaryota"/>
</dbReference>
<dbReference type="GeneTree" id="ENSGT00940000155640"/>
<dbReference type="HOGENOM" id="CLU_008155_1_0_1"/>
<dbReference type="InParanoid" id="Q62120"/>
<dbReference type="OMA" id="RCHNILV"/>
<dbReference type="OrthoDB" id="1915767at2759"/>
<dbReference type="PhylomeDB" id="Q62120"/>
<dbReference type="TreeFam" id="TF327041"/>
<dbReference type="BRENDA" id="2.7.10.2">
    <property type="organism ID" value="3474"/>
</dbReference>
<dbReference type="Reactome" id="R-MMU-1059683">
    <property type="pathway name" value="Interleukin-6 signaling"/>
</dbReference>
<dbReference type="Reactome" id="R-MMU-110056">
    <property type="pathway name" value="MAPK3 (ERK1) activation"/>
</dbReference>
<dbReference type="Reactome" id="R-MMU-112411">
    <property type="pathway name" value="MAPK1 (ERK2) activation"/>
</dbReference>
<dbReference type="Reactome" id="R-MMU-1170546">
    <property type="pathway name" value="Prolactin receptor signaling"/>
</dbReference>
<dbReference type="Reactome" id="R-MMU-1433557">
    <property type="pathway name" value="Signaling by SCF-KIT"/>
</dbReference>
<dbReference type="Reactome" id="R-MMU-512988">
    <property type="pathway name" value="Interleukin-3, Interleukin-5 and GM-CSF signaling"/>
</dbReference>
<dbReference type="Reactome" id="R-MMU-5673000">
    <property type="pathway name" value="RAF activation"/>
</dbReference>
<dbReference type="Reactome" id="R-MMU-5673001">
    <property type="pathway name" value="RAF/MAP kinase cascade"/>
</dbReference>
<dbReference type="Reactome" id="R-MMU-6785807">
    <property type="pathway name" value="Interleukin-4 and Interleukin-13 signaling"/>
</dbReference>
<dbReference type="Reactome" id="R-MMU-6788467">
    <property type="pathway name" value="IL-6-type cytokine receptor ligand interactions"/>
</dbReference>
<dbReference type="Reactome" id="R-MMU-69231">
    <property type="pathway name" value="Cyclin D associated events in G1"/>
</dbReference>
<dbReference type="Reactome" id="R-MMU-877300">
    <property type="pathway name" value="Interferon gamma signaling"/>
</dbReference>
<dbReference type="Reactome" id="R-MMU-877312">
    <property type="pathway name" value="Regulation of IFNG signaling"/>
</dbReference>
<dbReference type="Reactome" id="R-MMU-8854691">
    <property type="pathway name" value="Interleukin-20 family signaling"/>
</dbReference>
<dbReference type="Reactome" id="R-MMU-8984722">
    <property type="pathway name" value="Interleukin-35 Signalling"/>
</dbReference>
<dbReference type="Reactome" id="R-MMU-9006335">
    <property type="pathway name" value="Signaling by Erythropoietin"/>
</dbReference>
<dbReference type="Reactome" id="R-MMU-9020591">
    <property type="pathway name" value="Interleukin-12 signaling"/>
</dbReference>
<dbReference type="Reactome" id="R-MMU-9020933">
    <property type="pathway name" value="Interleukin-23 signaling"/>
</dbReference>
<dbReference type="Reactome" id="R-MMU-9020956">
    <property type="pathway name" value="Interleukin-27 signaling"/>
</dbReference>
<dbReference type="Reactome" id="R-MMU-9027276">
    <property type="pathway name" value="Erythropoietin activates Phosphoinositide-3-kinase (PI3K)"/>
</dbReference>
<dbReference type="Reactome" id="R-MMU-9027284">
    <property type="pathway name" value="Erythropoietin activates RAS"/>
</dbReference>
<dbReference type="Reactome" id="R-MMU-912526">
    <property type="pathway name" value="Interleukin receptor SHC signaling"/>
</dbReference>
<dbReference type="Reactome" id="R-MMU-9674555">
    <property type="pathway name" value="Signaling by CSF3 (G-CSF)"/>
</dbReference>
<dbReference type="Reactome" id="R-MMU-9705462">
    <property type="pathway name" value="Inactivation of CSF3 (G-CSF) signaling"/>
</dbReference>
<dbReference type="Reactome" id="R-MMU-9732724">
    <property type="pathway name" value="IFNG signaling activates MAPKs"/>
</dbReference>
<dbReference type="Reactome" id="R-MMU-982772">
    <property type="pathway name" value="Growth hormone receptor signaling"/>
</dbReference>
<dbReference type="Reactome" id="R-MMU-983231">
    <property type="pathway name" value="Factors involved in megakaryocyte development and platelet production"/>
</dbReference>
<dbReference type="BioGRID-ORCS" id="16452">
    <property type="hits" value="33 hits in 94 CRISPR screens"/>
</dbReference>
<dbReference type="ChiTaRS" id="Jak2">
    <property type="organism name" value="mouse"/>
</dbReference>
<dbReference type="EvolutionaryTrace" id="Q62120"/>
<dbReference type="PRO" id="PR:Q62120"/>
<dbReference type="Proteomes" id="UP000000589">
    <property type="component" value="Chromosome 19"/>
</dbReference>
<dbReference type="RNAct" id="Q62120">
    <property type="molecule type" value="protein"/>
</dbReference>
<dbReference type="Bgee" id="ENSMUSG00000024789">
    <property type="expression patterns" value="Expressed in animal zygote and 281 other cell types or tissues"/>
</dbReference>
<dbReference type="GO" id="GO:0005901">
    <property type="term" value="C:caveola"/>
    <property type="evidence" value="ECO:0000314"/>
    <property type="project" value="MGI"/>
</dbReference>
<dbReference type="GO" id="GO:0005737">
    <property type="term" value="C:cytoplasm"/>
    <property type="evidence" value="ECO:0000304"/>
    <property type="project" value="MGI"/>
</dbReference>
<dbReference type="GO" id="GO:0005856">
    <property type="term" value="C:cytoskeleton"/>
    <property type="evidence" value="ECO:0007669"/>
    <property type="project" value="InterPro"/>
</dbReference>
<dbReference type="GO" id="GO:0005829">
    <property type="term" value="C:cytosol"/>
    <property type="evidence" value="ECO:0000314"/>
    <property type="project" value="UniProt"/>
</dbReference>
<dbReference type="GO" id="GO:0012505">
    <property type="term" value="C:endomembrane system"/>
    <property type="evidence" value="ECO:0007669"/>
    <property type="project" value="UniProtKB-SubCell"/>
</dbReference>
<dbReference type="GO" id="GO:0000791">
    <property type="term" value="C:euchromatin"/>
    <property type="evidence" value="ECO:0007669"/>
    <property type="project" value="Ensembl"/>
</dbReference>
<dbReference type="GO" id="GO:0031234">
    <property type="term" value="C:extrinsic component of cytoplasmic side of plasma membrane"/>
    <property type="evidence" value="ECO:0007669"/>
    <property type="project" value="Ensembl"/>
</dbReference>
<dbReference type="GO" id="GO:0005925">
    <property type="term" value="C:focal adhesion"/>
    <property type="evidence" value="ECO:0007669"/>
    <property type="project" value="Ensembl"/>
</dbReference>
<dbReference type="GO" id="GO:0098978">
    <property type="term" value="C:glutamatergic synapse"/>
    <property type="evidence" value="ECO:0007669"/>
    <property type="project" value="Ensembl"/>
</dbReference>
<dbReference type="GO" id="GO:0030526">
    <property type="term" value="C:granulocyte macrophage colony-stimulating factor receptor complex"/>
    <property type="evidence" value="ECO:0007669"/>
    <property type="project" value="Ensembl"/>
</dbReference>
<dbReference type="GO" id="GO:0042022">
    <property type="term" value="C:interleukin-12 receptor complex"/>
    <property type="evidence" value="ECO:0000303"/>
    <property type="project" value="ComplexPortal"/>
</dbReference>
<dbReference type="GO" id="GO:0072536">
    <property type="term" value="C:interleukin-23 receptor complex"/>
    <property type="evidence" value="ECO:0000303"/>
    <property type="project" value="ComplexPortal"/>
</dbReference>
<dbReference type="GO" id="GO:0045121">
    <property type="term" value="C:membrane raft"/>
    <property type="evidence" value="ECO:0000314"/>
    <property type="project" value="MGI"/>
</dbReference>
<dbReference type="GO" id="GO:0005654">
    <property type="term" value="C:nucleoplasm"/>
    <property type="evidence" value="ECO:0007669"/>
    <property type="project" value="Ensembl"/>
</dbReference>
<dbReference type="GO" id="GO:0005634">
    <property type="term" value="C:nucleus"/>
    <property type="evidence" value="ECO:0000314"/>
    <property type="project" value="UniProtKB"/>
</dbReference>
<dbReference type="GO" id="GO:0005886">
    <property type="term" value="C:plasma membrane"/>
    <property type="evidence" value="ECO:0000303"/>
    <property type="project" value="ComplexPortal"/>
</dbReference>
<dbReference type="GO" id="GO:0098794">
    <property type="term" value="C:postsynapse"/>
    <property type="evidence" value="ECO:0007669"/>
    <property type="project" value="Ensembl"/>
</dbReference>
<dbReference type="GO" id="GO:0033130">
    <property type="term" value="F:acetylcholine receptor binding"/>
    <property type="evidence" value="ECO:0007669"/>
    <property type="project" value="Ensembl"/>
</dbReference>
<dbReference type="GO" id="GO:0005524">
    <property type="term" value="F:ATP binding"/>
    <property type="evidence" value="ECO:0007669"/>
    <property type="project" value="UniProtKB-KW"/>
</dbReference>
<dbReference type="GO" id="GO:0005131">
    <property type="term" value="F:growth hormone receptor binding"/>
    <property type="evidence" value="ECO:0000250"/>
    <property type="project" value="BHF-UCL"/>
</dbReference>
<dbReference type="GO" id="GO:0020037">
    <property type="term" value="F:heme binding"/>
    <property type="evidence" value="ECO:0000250"/>
    <property type="project" value="UniProtKB"/>
</dbReference>
<dbReference type="GO" id="GO:0042393">
    <property type="term" value="F:histone binding"/>
    <property type="evidence" value="ECO:0007669"/>
    <property type="project" value="InterPro"/>
</dbReference>
<dbReference type="GO" id="GO:0035401">
    <property type="term" value="F:histone H3Y41 kinase activity"/>
    <property type="evidence" value="ECO:0000250"/>
    <property type="project" value="UniProtKB"/>
</dbReference>
<dbReference type="GO" id="GO:0042802">
    <property type="term" value="F:identical protein binding"/>
    <property type="evidence" value="ECO:0007669"/>
    <property type="project" value="Ensembl"/>
</dbReference>
<dbReference type="GO" id="GO:0043560">
    <property type="term" value="F:insulin receptor substrate binding"/>
    <property type="evidence" value="ECO:0007669"/>
    <property type="project" value="Ensembl"/>
</dbReference>
<dbReference type="GO" id="GO:0005143">
    <property type="term" value="F:interleukin-12 receptor binding"/>
    <property type="evidence" value="ECO:0000353"/>
    <property type="project" value="MGI"/>
</dbReference>
<dbReference type="GO" id="GO:0046872">
    <property type="term" value="F:metal ion binding"/>
    <property type="evidence" value="ECO:0007669"/>
    <property type="project" value="UniProtKB-KW"/>
</dbReference>
<dbReference type="GO" id="GO:0004715">
    <property type="term" value="F:non-membrane spanning protein tyrosine kinase activity"/>
    <property type="evidence" value="ECO:0000314"/>
    <property type="project" value="UniProt"/>
</dbReference>
<dbReference type="GO" id="GO:0051428">
    <property type="term" value="F:peptide hormone receptor binding"/>
    <property type="evidence" value="ECO:0007669"/>
    <property type="project" value="Ensembl"/>
</dbReference>
<dbReference type="GO" id="GO:0043548">
    <property type="term" value="F:phosphatidylinositol 3-kinase binding"/>
    <property type="evidence" value="ECO:0007669"/>
    <property type="project" value="Ensembl"/>
</dbReference>
<dbReference type="GO" id="GO:0019901">
    <property type="term" value="F:protein kinase binding"/>
    <property type="evidence" value="ECO:0000250"/>
    <property type="project" value="BHF-UCL"/>
</dbReference>
<dbReference type="GO" id="GO:0004713">
    <property type="term" value="F:protein tyrosine kinase activity"/>
    <property type="evidence" value="ECO:0000314"/>
    <property type="project" value="UniProtKB"/>
</dbReference>
<dbReference type="GO" id="GO:0042169">
    <property type="term" value="F:SH2 domain binding"/>
    <property type="evidence" value="ECO:0007669"/>
    <property type="project" value="Ensembl"/>
</dbReference>
<dbReference type="GO" id="GO:0030546">
    <property type="term" value="F:signaling receptor activator activity"/>
    <property type="evidence" value="ECO:0000314"/>
    <property type="project" value="ARUK-UCL"/>
</dbReference>
<dbReference type="GO" id="GO:0031702">
    <property type="term" value="F:type 1 angiotensin receptor binding"/>
    <property type="evidence" value="ECO:0007669"/>
    <property type="project" value="Ensembl"/>
</dbReference>
<dbReference type="GO" id="GO:0042976">
    <property type="term" value="P:activation of Janus kinase activity"/>
    <property type="evidence" value="ECO:0000314"/>
    <property type="project" value="UniProtKB"/>
</dbReference>
<dbReference type="GO" id="GO:0002250">
    <property type="term" value="P:adaptive immune response"/>
    <property type="evidence" value="ECO:0007669"/>
    <property type="project" value="UniProtKB-KW"/>
</dbReference>
<dbReference type="GO" id="GO:0031103">
    <property type="term" value="P:axon regeneration"/>
    <property type="evidence" value="ECO:0000250"/>
    <property type="project" value="BHF-UCL"/>
</dbReference>
<dbReference type="GO" id="GO:0007155">
    <property type="term" value="P:cell adhesion"/>
    <property type="evidence" value="ECO:0007669"/>
    <property type="project" value="Ensembl"/>
</dbReference>
<dbReference type="GO" id="GO:0030154">
    <property type="term" value="P:cell differentiation"/>
    <property type="evidence" value="ECO:0000315"/>
    <property type="project" value="MGI"/>
</dbReference>
<dbReference type="GO" id="GO:0007259">
    <property type="term" value="P:cell surface receptor signaling pathway via JAK-STAT"/>
    <property type="evidence" value="ECO:0000314"/>
    <property type="project" value="MGI"/>
</dbReference>
<dbReference type="GO" id="GO:0071549">
    <property type="term" value="P:cellular response to dexamethasone stimulus"/>
    <property type="evidence" value="ECO:0000314"/>
    <property type="project" value="MGI"/>
</dbReference>
<dbReference type="GO" id="GO:0036016">
    <property type="term" value="P:cellular response to interleukin-3"/>
    <property type="evidence" value="ECO:0000314"/>
    <property type="project" value="MGI"/>
</dbReference>
<dbReference type="GO" id="GO:0071222">
    <property type="term" value="P:cellular response to lipopolysaccharide"/>
    <property type="evidence" value="ECO:0000314"/>
    <property type="project" value="MGI"/>
</dbReference>
<dbReference type="GO" id="GO:0038065">
    <property type="term" value="P:collagen-activated signaling pathway"/>
    <property type="evidence" value="ECO:0007669"/>
    <property type="project" value="Ensembl"/>
</dbReference>
<dbReference type="GO" id="GO:0019221">
    <property type="term" value="P:cytokine-mediated signaling pathway"/>
    <property type="evidence" value="ECO:0000315"/>
    <property type="project" value="UniProtKB"/>
</dbReference>
<dbReference type="GO" id="GO:0140546">
    <property type="term" value="P:defense response to symbiont"/>
    <property type="evidence" value="ECO:0000315"/>
    <property type="project" value="BHF-UCL"/>
</dbReference>
<dbReference type="GO" id="GO:0007167">
    <property type="term" value="P:enzyme-linked receptor protein signaling pathway"/>
    <property type="evidence" value="ECO:0000314"/>
    <property type="project" value="MGI"/>
</dbReference>
<dbReference type="GO" id="GO:0030218">
    <property type="term" value="P:erythrocyte differentiation"/>
    <property type="evidence" value="ECO:0000315"/>
    <property type="project" value="UniProtKB"/>
</dbReference>
<dbReference type="GO" id="GO:0038162">
    <property type="term" value="P:erythropoietin-mediated signaling pathway"/>
    <property type="evidence" value="ECO:0007669"/>
    <property type="project" value="Ensembl"/>
</dbReference>
<dbReference type="GO" id="GO:0097191">
    <property type="term" value="P:extrinsic apoptotic signaling pathway"/>
    <property type="evidence" value="ECO:0000314"/>
    <property type="project" value="MGI"/>
</dbReference>
<dbReference type="GO" id="GO:0038157">
    <property type="term" value="P:granulocyte-macrophage colony-stimulating factor signaling pathway"/>
    <property type="evidence" value="ECO:0007669"/>
    <property type="project" value="Ensembl"/>
</dbReference>
<dbReference type="GO" id="GO:0060396">
    <property type="term" value="P:growth hormone receptor signaling pathway"/>
    <property type="evidence" value="ECO:0000250"/>
    <property type="project" value="BHF-UCL"/>
</dbReference>
<dbReference type="GO" id="GO:0060397">
    <property type="term" value="P:growth hormone receptor signaling pathway via JAK-STAT"/>
    <property type="evidence" value="ECO:0000314"/>
    <property type="project" value="BHF-UCL"/>
</dbReference>
<dbReference type="GO" id="GO:0009755">
    <property type="term" value="P:hormone-mediated signaling pathway"/>
    <property type="evidence" value="ECO:0000250"/>
    <property type="project" value="BHF-UCL"/>
</dbReference>
<dbReference type="GO" id="GO:0006955">
    <property type="term" value="P:immune response"/>
    <property type="evidence" value="ECO:0000303"/>
    <property type="project" value="ComplexPortal"/>
</dbReference>
<dbReference type="GO" id="GO:0035722">
    <property type="term" value="P:interleukin-12-mediated signaling pathway"/>
    <property type="evidence" value="ECO:0000250"/>
    <property type="project" value="BHF-UCL"/>
</dbReference>
<dbReference type="GO" id="GO:0038155">
    <property type="term" value="P:interleukin-23-mediated signaling pathway"/>
    <property type="evidence" value="ECO:0007669"/>
    <property type="project" value="Ensembl"/>
</dbReference>
<dbReference type="GO" id="GO:0038156">
    <property type="term" value="P:interleukin-3-mediated signaling pathway"/>
    <property type="evidence" value="ECO:0007669"/>
    <property type="project" value="Ensembl"/>
</dbReference>
<dbReference type="GO" id="GO:0038043">
    <property type="term" value="P:interleukin-5-mediated signaling pathway"/>
    <property type="evidence" value="ECO:0007669"/>
    <property type="project" value="Ensembl"/>
</dbReference>
<dbReference type="GO" id="GO:0035556">
    <property type="term" value="P:intracellular signal transduction"/>
    <property type="evidence" value="ECO:0000314"/>
    <property type="project" value="MGI"/>
</dbReference>
<dbReference type="GO" id="GO:0008631">
    <property type="term" value="P:intrinsic apoptotic signaling pathway in response to oxidative stress"/>
    <property type="evidence" value="ECO:0000250"/>
    <property type="project" value="BHF-UCL"/>
</dbReference>
<dbReference type="GO" id="GO:0031663">
    <property type="term" value="P:lipopolysaccharide-mediated signaling pathway"/>
    <property type="evidence" value="ECO:0000315"/>
    <property type="project" value="BHF-UCL"/>
</dbReference>
<dbReference type="GO" id="GO:0061180">
    <property type="term" value="P:mammary gland epithelium development"/>
    <property type="evidence" value="ECO:0000315"/>
    <property type="project" value="MGI"/>
</dbReference>
<dbReference type="GO" id="GO:0001774">
    <property type="term" value="P:microglial cell activation"/>
    <property type="evidence" value="ECO:0000316"/>
    <property type="project" value="ARUK-UCL"/>
</dbReference>
<dbReference type="GO" id="GO:0050804">
    <property type="term" value="P:modulation of chemical synaptic transmission"/>
    <property type="evidence" value="ECO:0007669"/>
    <property type="project" value="Ensembl"/>
</dbReference>
<dbReference type="GO" id="GO:0030099">
    <property type="term" value="P:myeloid cell differentiation"/>
    <property type="evidence" value="ECO:0000315"/>
    <property type="project" value="MGI"/>
</dbReference>
<dbReference type="GO" id="GO:0043066">
    <property type="term" value="P:negative regulation of apoptotic process"/>
    <property type="evidence" value="ECO:0000314"/>
    <property type="project" value="MGI"/>
</dbReference>
<dbReference type="GO" id="GO:0010667">
    <property type="term" value="P:negative regulation of cardiac muscle cell apoptotic process"/>
    <property type="evidence" value="ECO:0007669"/>
    <property type="project" value="Ensembl"/>
</dbReference>
<dbReference type="GO" id="GO:0008285">
    <property type="term" value="P:negative regulation of cell population proliferation"/>
    <property type="evidence" value="ECO:0000315"/>
    <property type="project" value="MGI"/>
</dbReference>
<dbReference type="GO" id="GO:0022408">
    <property type="term" value="P:negative regulation of cell-cell adhesion"/>
    <property type="evidence" value="ECO:0000250"/>
    <property type="project" value="BHF-UCL"/>
</dbReference>
<dbReference type="GO" id="GO:1900016">
    <property type="term" value="P:negative regulation of cytokine production involved in inflammatory response"/>
    <property type="evidence" value="ECO:0000314"/>
    <property type="project" value="UniProt"/>
</dbReference>
<dbReference type="GO" id="GO:0043524">
    <property type="term" value="P:negative regulation of neuron apoptotic process"/>
    <property type="evidence" value="ECO:0007669"/>
    <property type="project" value="Ensembl"/>
</dbReference>
<dbReference type="GO" id="GO:0031959">
    <property type="term" value="P:nuclear receptor-mediated mineralocorticoid signaling pathway"/>
    <property type="evidence" value="ECO:0000250"/>
    <property type="project" value="BHF-UCL"/>
</dbReference>
<dbReference type="GO" id="GO:0048008">
    <property type="term" value="P:platelet-derived growth factor receptor signaling pathway"/>
    <property type="evidence" value="ECO:0000250"/>
    <property type="project" value="BHF-UCL"/>
</dbReference>
<dbReference type="GO" id="GO:2001235">
    <property type="term" value="P:positive regulation of apoptotic signaling pathway"/>
    <property type="evidence" value="ECO:0000315"/>
    <property type="project" value="MGI"/>
</dbReference>
<dbReference type="GO" id="GO:0050867">
    <property type="term" value="P:positive regulation of cell activation"/>
    <property type="evidence" value="ECO:0000250"/>
    <property type="project" value="BHF-UCL"/>
</dbReference>
<dbReference type="GO" id="GO:0045597">
    <property type="term" value="P:positive regulation of cell differentiation"/>
    <property type="evidence" value="ECO:0000250"/>
    <property type="project" value="BHF-UCL"/>
</dbReference>
<dbReference type="GO" id="GO:0030335">
    <property type="term" value="P:positive regulation of cell migration"/>
    <property type="evidence" value="ECO:0000250"/>
    <property type="project" value="BHF-UCL"/>
</dbReference>
<dbReference type="GO" id="GO:0008284">
    <property type="term" value="P:positive regulation of cell population proliferation"/>
    <property type="evidence" value="ECO:0000250"/>
    <property type="project" value="BHF-UCL"/>
</dbReference>
<dbReference type="GO" id="GO:0010811">
    <property type="term" value="P:positive regulation of cell-substrate adhesion"/>
    <property type="evidence" value="ECO:0000250"/>
    <property type="project" value="BHF-UCL"/>
</dbReference>
<dbReference type="GO" id="GO:0120162">
    <property type="term" value="P:positive regulation of cold-induced thermogenesis"/>
    <property type="evidence" value="ECO:0000315"/>
    <property type="project" value="YuBioLab"/>
</dbReference>
<dbReference type="GO" id="GO:0007204">
    <property type="term" value="P:positive regulation of cytosolic calcium ion concentration"/>
    <property type="evidence" value="ECO:0000250"/>
    <property type="project" value="BHF-UCL"/>
</dbReference>
<dbReference type="GO" id="GO:1904037">
    <property type="term" value="P:positive regulation of epithelial cell apoptotic process"/>
    <property type="evidence" value="ECO:0007669"/>
    <property type="project" value="Ensembl"/>
</dbReference>
<dbReference type="GO" id="GO:1902728">
    <property type="term" value="P:positive regulation of growth factor dependent skeletal muscle satellite cell proliferation"/>
    <property type="evidence" value="ECO:0007669"/>
    <property type="project" value="Ensembl"/>
</dbReference>
<dbReference type="GO" id="GO:0060399">
    <property type="term" value="P:positive regulation of growth hormone receptor signaling pathway"/>
    <property type="evidence" value="ECO:0000315"/>
    <property type="project" value="BHF-UCL"/>
</dbReference>
<dbReference type="GO" id="GO:0032024">
    <property type="term" value="P:positive regulation of insulin secretion"/>
    <property type="evidence" value="ECO:0000250"/>
    <property type="project" value="BHF-UCL"/>
</dbReference>
<dbReference type="GO" id="GO:0032731">
    <property type="term" value="P:positive regulation of interleukin-1 beta production"/>
    <property type="evidence" value="ECO:0000316"/>
    <property type="project" value="ARUK-UCL"/>
</dbReference>
<dbReference type="GO" id="GO:0032740">
    <property type="term" value="P:positive regulation of interleukin-17 production"/>
    <property type="evidence" value="ECO:0000303"/>
    <property type="project" value="ComplexPortal"/>
</dbReference>
<dbReference type="GO" id="GO:0043410">
    <property type="term" value="P:positive regulation of MAPK cascade"/>
    <property type="evidence" value="ECO:0007669"/>
    <property type="project" value="Ensembl"/>
</dbReference>
<dbReference type="GO" id="GO:0045348">
    <property type="term" value="P:positive regulation of MHC class II biosynthetic process"/>
    <property type="evidence" value="ECO:0000316"/>
    <property type="project" value="ARUK-UCL"/>
</dbReference>
<dbReference type="GO" id="GO:0032819">
    <property type="term" value="P:positive regulation of natural killer cell proliferation"/>
    <property type="evidence" value="ECO:0000266"/>
    <property type="project" value="ComplexPortal"/>
</dbReference>
<dbReference type="GO" id="GO:0045429">
    <property type="term" value="P:positive regulation of nitric oxide biosynthetic process"/>
    <property type="evidence" value="ECO:0000250"/>
    <property type="project" value="BHF-UCL"/>
</dbReference>
<dbReference type="GO" id="GO:0051142">
    <property type="term" value="P:positive regulation of NK T cell proliferation"/>
    <property type="evidence" value="ECO:0000266"/>
    <property type="project" value="ComplexPortal"/>
</dbReference>
<dbReference type="GO" id="GO:0051897">
    <property type="term" value="P:positive regulation of phosphatidylinositol 3-kinase/protein kinase B signal transduction"/>
    <property type="evidence" value="ECO:0000315"/>
    <property type="project" value="BHF-UCL"/>
</dbReference>
<dbReference type="GO" id="GO:0010572">
    <property type="term" value="P:positive regulation of platelet activation"/>
    <property type="evidence" value="ECO:0007669"/>
    <property type="project" value="Ensembl"/>
</dbReference>
<dbReference type="GO" id="GO:1901731">
    <property type="term" value="P:positive regulation of platelet aggregation"/>
    <property type="evidence" value="ECO:0007669"/>
    <property type="project" value="Ensembl"/>
</dbReference>
<dbReference type="GO" id="GO:0042307">
    <property type="term" value="P:positive regulation of protein import into nucleus"/>
    <property type="evidence" value="ECO:0007669"/>
    <property type="project" value="Ensembl"/>
</dbReference>
<dbReference type="GO" id="GO:0046427">
    <property type="term" value="P:positive regulation of receptor signaling pathway via JAK-STAT"/>
    <property type="evidence" value="ECO:0000266"/>
    <property type="project" value="ComplexPortal"/>
</dbReference>
<dbReference type="GO" id="GO:0060391">
    <property type="term" value="P:positive regulation of SMAD protein signal transduction"/>
    <property type="evidence" value="ECO:0000266"/>
    <property type="project" value="MGI"/>
</dbReference>
<dbReference type="GO" id="GO:0042102">
    <property type="term" value="P:positive regulation of T cell proliferation"/>
    <property type="evidence" value="ECO:0000314"/>
    <property type="project" value="ComplexPortal"/>
</dbReference>
<dbReference type="GO" id="GO:2000318">
    <property type="term" value="P:positive regulation of T-helper 17 type immune response"/>
    <property type="evidence" value="ECO:0000303"/>
    <property type="project" value="ComplexPortal"/>
</dbReference>
<dbReference type="GO" id="GO:0045944">
    <property type="term" value="P:positive regulation of transcription by RNA polymerase II"/>
    <property type="evidence" value="ECO:0000315"/>
    <property type="project" value="BHF-UCL"/>
</dbReference>
<dbReference type="GO" id="GO:0032760">
    <property type="term" value="P:positive regulation of tumor necrosis factor production"/>
    <property type="evidence" value="ECO:0000314"/>
    <property type="project" value="BHF-UCL"/>
</dbReference>
<dbReference type="GO" id="GO:0032729">
    <property type="term" value="P:positive regulation of type II interferon production"/>
    <property type="evidence" value="ECO:0000266"/>
    <property type="project" value="ComplexPortal"/>
</dbReference>
<dbReference type="GO" id="GO:0042531">
    <property type="term" value="P:positive regulation of tyrosine phosphorylation of STAT protein"/>
    <property type="evidence" value="ECO:0000314"/>
    <property type="project" value="UniProtKB"/>
</dbReference>
<dbReference type="GO" id="GO:1904707">
    <property type="term" value="P:positive regulation of vascular associated smooth muscle cell proliferation"/>
    <property type="evidence" value="ECO:0007669"/>
    <property type="project" value="Ensembl"/>
</dbReference>
<dbReference type="GO" id="GO:0035166">
    <property type="term" value="P:post-embryonic hemopoiesis"/>
    <property type="evidence" value="ECO:0000315"/>
    <property type="project" value="CACAO"/>
</dbReference>
<dbReference type="GO" id="GO:0043687">
    <property type="term" value="P:post-translational protein modification"/>
    <property type="evidence" value="ECO:0000250"/>
    <property type="project" value="UniProtKB"/>
</dbReference>
<dbReference type="GO" id="GO:0046777">
    <property type="term" value="P:protein autophosphorylation"/>
    <property type="evidence" value="ECO:0000314"/>
    <property type="project" value="UniProtKB"/>
</dbReference>
<dbReference type="GO" id="GO:0050727">
    <property type="term" value="P:regulation of inflammatory response"/>
    <property type="evidence" value="ECO:0000250"/>
    <property type="project" value="BHF-UCL"/>
</dbReference>
<dbReference type="GO" id="GO:1905539">
    <property type="term" value="P:regulation of postsynapse to nucleus signaling pathway"/>
    <property type="evidence" value="ECO:0007669"/>
    <property type="project" value="Ensembl"/>
</dbReference>
<dbReference type="GO" id="GO:0014075">
    <property type="term" value="P:response to amine"/>
    <property type="evidence" value="ECO:0007669"/>
    <property type="project" value="Ensembl"/>
</dbReference>
<dbReference type="GO" id="GO:0046677">
    <property type="term" value="P:response to antibiotic"/>
    <property type="evidence" value="ECO:0000266"/>
    <property type="project" value="MGI"/>
</dbReference>
<dbReference type="GO" id="GO:0097012">
    <property type="term" value="P:response to granulocyte macrophage colony-stimulating factor"/>
    <property type="evidence" value="ECO:0000303"/>
    <property type="project" value="BHF-UCL"/>
</dbReference>
<dbReference type="GO" id="GO:0033194">
    <property type="term" value="P:response to hydroperoxide"/>
    <property type="evidence" value="ECO:0000250"/>
    <property type="project" value="BHF-UCL"/>
</dbReference>
<dbReference type="GO" id="GO:0070671">
    <property type="term" value="P:response to interleukin-12"/>
    <property type="evidence" value="ECO:0000250"/>
    <property type="project" value="BHF-UCL"/>
</dbReference>
<dbReference type="GO" id="GO:0006979">
    <property type="term" value="P:response to oxidative stress"/>
    <property type="evidence" value="ECO:0000250"/>
    <property type="project" value="BHF-UCL"/>
</dbReference>
<dbReference type="GO" id="GO:0034612">
    <property type="term" value="P:response to tumor necrosis factor"/>
    <property type="evidence" value="ECO:0000250"/>
    <property type="project" value="BHF-UCL"/>
</dbReference>
<dbReference type="GO" id="GO:0007165">
    <property type="term" value="P:signal transduction"/>
    <property type="evidence" value="ECO:0000315"/>
    <property type="project" value="UniProtKB"/>
</dbReference>
<dbReference type="GO" id="GO:0034050">
    <property type="term" value="P:symbiont-induced defense-related programmed cell death"/>
    <property type="evidence" value="ECO:0000314"/>
    <property type="project" value="MGI"/>
</dbReference>
<dbReference type="GO" id="GO:0038163">
    <property type="term" value="P:thrombopoietin-mediated signaling pathway"/>
    <property type="evidence" value="ECO:0007669"/>
    <property type="project" value="Ensembl"/>
</dbReference>
<dbReference type="GO" id="GO:0006366">
    <property type="term" value="P:transcription by RNA polymerase II"/>
    <property type="evidence" value="ECO:0000316"/>
    <property type="project" value="MGI"/>
</dbReference>
<dbReference type="GO" id="GO:0033209">
    <property type="term" value="P:tumor necrosis factor-mediated signaling pathway"/>
    <property type="evidence" value="ECO:0000250"/>
    <property type="project" value="BHF-UCL"/>
</dbReference>
<dbReference type="GO" id="GO:0060333">
    <property type="term" value="P:type II interferon-mediated signaling pathway"/>
    <property type="evidence" value="ECO:0000250"/>
    <property type="project" value="BHF-UCL"/>
</dbReference>
<dbReference type="CDD" id="cd14473">
    <property type="entry name" value="FERM_B-lobe"/>
    <property type="match status" value="1"/>
</dbReference>
<dbReference type="CDD" id="cd13333">
    <property type="entry name" value="FERM_C_JAK2"/>
    <property type="match status" value="1"/>
</dbReference>
<dbReference type="CDD" id="cd05078">
    <property type="entry name" value="PTK_Jak2_rpt1"/>
    <property type="match status" value="1"/>
</dbReference>
<dbReference type="CDD" id="cd14205">
    <property type="entry name" value="PTKc_Jak2_rpt2"/>
    <property type="match status" value="1"/>
</dbReference>
<dbReference type="CDD" id="cd10379">
    <property type="entry name" value="SH2_Jak2"/>
    <property type="match status" value="1"/>
</dbReference>
<dbReference type="FunFam" id="1.10.510.10:FF:000110">
    <property type="entry name" value="Tyrosine-protein kinase"/>
    <property type="match status" value="1"/>
</dbReference>
<dbReference type="FunFam" id="2.30.29.30:FF:000177">
    <property type="entry name" value="Tyrosine-protein kinase"/>
    <property type="match status" value="1"/>
</dbReference>
<dbReference type="FunFam" id="3.30.200.20:FF:000084">
    <property type="entry name" value="Tyrosine-protein kinase"/>
    <property type="match status" value="1"/>
</dbReference>
<dbReference type="FunFam" id="3.30.200.20:FF:000135">
    <property type="entry name" value="Tyrosine-protein kinase"/>
    <property type="match status" value="1"/>
</dbReference>
<dbReference type="FunFam" id="3.30.505.10:FF:000037">
    <property type="entry name" value="Tyrosine-protein kinase"/>
    <property type="match status" value="1"/>
</dbReference>
<dbReference type="FunFam" id="1.10.510.10:FF:000114">
    <property type="entry name" value="Tyrosine-protein kinase JAK2"/>
    <property type="match status" value="1"/>
</dbReference>
<dbReference type="Gene3D" id="3.30.200.20">
    <property type="entry name" value="Phosphorylase Kinase, domain 1"/>
    <property type="match status" value="2"/>
</dbReference>
<dbReference type="Gene3D" id="2.30.29.30">
    <property type="entry name" value="Pleckstrin-homology domain (PH domain)/Phosphotyrosine-binding domain (PTB)"/>
    <property type="match status" value="1"/>
</dbReference>
<dbReference type="Gene3D" id="3.30.505.10">
    <property type="entry name" value="SH2 domain"/>
    <property type="match status" value="1"/>
</dbReference>
<dbReference type="Gene3D" id="1.10.510.10">
    <property type="entry name" value="Transferase(Phosphotransferase) domain 1"/>
    <property type="match status" value="2"/>
</dbReference>
<dbReference type="IDEAL" id="IID50091"/>
<dbReference type="InterPro" id="IPR019749">
    <property type="entry name" value="Band_41_domain"/>
</dbReference>
<dbReference type="InterPro" id="IPR035963">
    <property type="entry name" value="FERM_2"/>
</dbReference>
<dbReference type="InterPro" id="IPR019748">
    <property type="entry name" value="FERM_central"/>
</dbReference>
<dbReference type="InterPro" id="IPR000299">
    <property type="entry name" value="FERM_domain"/>
</dbReference>
<dbReference type="InterPro" id="IPR041155">
    <property type="entry name" value="FERM_F1"/>
</dbReference>
<dbReference type="InterPro" id="IPR041046">
    <property type="entry name" value="FERM_F2"/>
</dbReference>
<dbReference type="InterPro" id="IPR051286">
    <property type="entry name" value="JAK"/>
</dbReference>
<dbReference type="InterPro" id="IPR041381">
    <property type="entry name" value="JAK1-3/TYK2_PHL_dom"/>
</dbReference>
<dbReference type="InterPro" id="IPR037838">
    <property type="entry name" value="JAK2_FERM_C-lobe"/>
</dbReference>
<dbReference type="InterPro" id="IPR035860">
    <property type="entry name" value="JAK2_SH2"/>
</dbReference>
<dbReference type="InterPro" id="IPR011009">
    <property type="entry name" value="Kinase-like_dom_sf"/>
</dbReference>
<dbReference type="InterPro" id="IPR011993">
    <property type="entry name" value="PH-like_dom_sf"/>
</dbReference>
<dbReference type="InterPro" id="IPR000719">
    <property type="entry name" value="Prot_kinase_dom"/>
</dbReference>
<dbReference type="InterPro" id="IPR017441">
    <property type="entry name" value="Protein_kinase_ATP_BS"/>
</dbReference>
<dbReference type="InterPro" id="IPR035588">
    <property type="entry name" value="PTK_Jak2_rpt1"/>
</dbReference>
<dbReference type="InterPro" id="IPR035589">
    <property type="entry name" value="PTKc_Jak2_rpt2"/>
</dbReference>
<dbReference type="InterPro" id="IPR001245">
    <property type="entry name" value="Ser-Thr/Tyr_kinase_cat_dom"/>
</dbReference>
<dbReference type="InterPro" id="IPR000980">
    <property type="entry name" value="SH2"/>
</dbReference>
<dbReference type="InterPro" id="IPR036860">
    <property type="entry name" value="SH2_dom_sf"/>
</dbReference>
<dbReference type="InterPro" id="IPR008266">
    <property type="entry name" value="Tyr_kinase_AS"/>
</dbReference>
<dbReference type="InterPro" id="IPR020635">
    <property type="entry name" value="Tyr_kinase_cat_dom"/>
</dbReference>
<dbReference type="InterPro" id="IPR016251">
    <property type="entry name" value="Tyr_kinase_non-rcpt_Jak/Tyk2"/>
</dbReference>
<dbReference type="InterPro" id="IPR020693">
    <property type="entry name" value="Tyr_kinase_non-rcpt_Jak2"/>
</dbReference>
<dbReference type="PANTHER" id="PTHR45807">
    <property type="entry name" value="TYROSINE-PROTEIN KINASE HOPSCOTCH"/>
    <property type="match status" value="1"/>
</dbReference>
<dbReference type="PANTHER" id="PTHR45807:SF1">
    <property type="entry name" value="TYROSINE-PROTEIN KINASE JAK2"/>
    <property type="match status" value="1"/>
</dbReference>
<dbReference type="Pfam" id="PF18379">
    <property type="entry name" value="FERM_F1"/>
    <property type="match status" value="1"/>
</dbReference>
<dbReference type="Pfam" id="PF18377">
    <property type="entry name" value="FERM_F2"/>
    <property type="match status" value="1"/>
</dbReference>
<dbReference type="Pfam" id="PF17887">
    <property type="entry name" value="Jak1_Phl"/>
    <property type="match status" value="1"/>
</dbReference>
<dbReference type="Pfam" id="PF07714">
    <property type="entry name" value="PK_Tyr_Ser-Thr"/>
    <property type="match status" value="2"/>
</dbReference>
<dbReference type="Pfam" id="PF21990">
    <property type="entry name" value="SH2_1"/>
    <property type="match status" value="1"/>
</dbReference>
<dbReference type="PIRSF" id="PIRSF000636">
    <property type="entry name" value="TyrPK_Jak"/>
    <property type="match status" value="1"/>
</dbReference>
<dbReference type="PRINTS" id="PR01823">
    <property type="entry name" value="JANUSKINASE"/>
</dbReference>
<dbReference type="PRINTS" id="PR01825">
    <property type="entry name" value="JANUSKINASE2"/>
</dbReference>
<dbReference type="PRINTS" id="PR00109">
    <property type="entry name" value="TYRKINASE"/>
</dbReference>
<dbReference type="SMART" id="SM00295">
    <property type="entry name" value="B41"/>
    <property type="match status" value="1"/>
</dbReference>
<dbReference type="SMART" id="SM00252">
    <property type="entry name" value="SH2"/>
    <property type="match status" value="1"/>
</dbReference>
<dbReference type="SMART" id="SM00219">
    <property type="entry name" value="TyrKc"/>
    <property type="match status" value="2"/>
</dbReference>
<dbReference type="SUPFAM" id="SSF50729">
    <property type="entry name" value="PH domain-like"/>
    <property type="match status" value="1"/>
</dbReference>
<dbReference type="SUPFAM" id="SSF56112">
    <property type="entry name" value="Protein kinase-like (PK-like)"/>
    <property type="match status" value="2"/>
</dbReference>
<dbReference type="SUPFAM" id="SSF47031">
    <property type="entry name" value="Second domain of FERM"/>
    <property type="match status" value="1"/>
</dbReference>
<dbReference type="SUPFAM" id="SSF55550">
    <property type="entry name" value="SH2 domain"/>
    <property type="match status" value="1"/>
</dbReference>
<dbReference type="PROSITE" id="PS50057">
    <property type="entry name" value="FERM_3"/>
    <property type="match status" value="1"/>
</dbReference>
<dbReference type="PROSITE" id="PS00107">
    <property type="entry name" value="PROTEIN_KINASE_ATP"/>
    <property type="match status" value="1"/>
</dbReference>
<dbReference type="PROSITE" id="PS50011">
    <property type="entry name" value="PROTEIN_KINASE_DOM"/>
    <property type="match status" value="2"/>
</dbReference>
<dbReference type="PROSITE" id="PS00109">
    <property type="entry name" value="PROTEIN_KINASE_TYR"/>
    <property type="match status" value="1"/>
</dbReference>
<dbReference type="PROSITE" id="PS50001">
    <property type="entry name" value="SH2"/>
    <property type="match status" value="1"/>
</dbReference>
<evidence type="ECO:0000250" key="1"/>
<evidence type="ECO:0000250" key="2">
    <source>
        <dbReference type="UniProtKB" id="O60674"/>
    </source>
</evidence>
<evidence type="ECO:0000255" key="3">
    <source>
        <dbReference type="PROSITE-ProRule" id="PRU00084"/>
    </source>
</evidence>
<evidence type="ECO:0000255" key="4">
    <source>
        <dbReference type="PROSITE-ProRule" id="PRU00159"/>
    </source>
</evidence>
<evidence type="ECO:0000255" key="5">
    <source>
        <dbReference type="PROSITE-ProRule" id="PRU00191"/>
    </source>
</evidence>
<evidence type="ECO:0000255" key="6">
    <source>
        <dbReference type="PROSITE-ProRule" id="PRU10028"/>
    </source>
</evidence>
<evidence type="ECO:0000269" key="7">
    <source>
    </source>
</evidence>
<evidence type="ECO:0000269" key="8">
    <source>
    </source>
</evidence>
<evidence type="ECO:0000269" key="9">
    <source>
    </source>
</evidence>
<evidence type="ECO:0000269" key="10">
    <source>
    </source>
</evidence>
<evidence type="ECO:0000269" key="11">
    <source>
    </source>
</evidence>
<evidence type="ECO:0000269" key="12">
    <source>
    </source>
</evidence>
<evidence type="ECO:0000269" key="13">
    <source>
    </source>
</evidence>
<evidence type="ECO:0000269" key="14">
    <source>
    </source>
</evidence>
<evidence type="ECO:0000269" key="15">
    <source>
    </source>
</evidence>
<evidence type="ECO:0000269" key="16">
    <source>
    </source>
</evidence>
<evidence type="ECO:0000269" key="17">
    <source>
    </source>
</evidence>
<evidence type="ECO:0000269" key="18">
    <source>
    </source>
</evidence>
<evidence type="ECO:0000269" key="19">
    <source>
    </source>
</evidence>
<evidence type="ECO:0000269" key="20">
    <source>
    </source>
</evidence>
<evidence type="ECO:0000269" key="21">
    <source>
    </source>
</evidence>
<evidence type="ECO:0000269" key="22">
    <source>
    </source>
</evidence>
<evidence type="ECO:0000269" key="23">
    <source>
    </source>
</evidence>
<evidence type="ECO:0000269" key="24">
    <source>
    </source>
</evidence>
<evidence type="ECO:0000305" key="25"/>
<evidence type="ECO:0000305" key="26">
    <source>
    </source>
</evidence>
<evidence type="ECO:0000312" key="27">
    <source>
        <dbReference type="MGI" id="MGI:96629"/>
    </source>
</evidence>
<evidence type="ECO:0007744" key="28">
    <source>
    </source>
</evidence>
<evidence type="ECO:0007744" key="29">
    <source>
    </source>
</evidence>
<organism>
    <name type="scientific">Mus musculus</name>
    <name type="common">Mouse</name>
    <dbReference type="NCBI Taxonomy" id="10090"/>
    <lineage>
        <taxon>Eukaryota</taxon>
        <taxon>Metazoa</taxon>
        <taxon>Chordata</taxon>
        <taxon>Craniata</taxon>
        <taxon>Vertebrata</taxon>
        <taxon>Euteleostomi</taxon>
        <taxon>Mammalia</taxon>
        <taxon>Eutheria</taxon>
        <taxon>Euarchontoglires</taxon>
        <taxon>Glires</taxon>
        <taxon>Rodentia</taxon>
        <taxon>Myomorpha</taxon>
        <taxon>Muroidea</taxon>
        <taxon>Muridae</taxon>
        <taxon>Murinae</taxon>
        <taxon>Mus</taxon>
        <taxon>Mus</taxon>
    </lineage>
</organism>
<reference key="1">
    <citation type="journal article" date="1993" name="Proc. Natl. Acad. Sci. U.S.A.">
        <title>Structure of the murine Jak2 protein-tyrosine kinase and its role in interleukin 3 signal transduction.</title>
        <authorList>
            <person name="Silvennoinen O."/>
            <person name="Witthuhn B.A."/>
            <person name="Quelle F.W."/>
            <person name="Cleveland J.L."/>
            <person name="Yi T."/>
            <person name="Ihle J.N."/>
        </authorList>
    </citation>
    <scope>NUCLEOTIDE SEQUENCE [MRNA]</scope>
</reference>
<reference key="2">
    <citation type="journal article" date="2009" name="PLoS Biol.">
        <title>Lineage-specific biology revealed by a finished genome assembly of the mouse.</title>
        <authorList>
            <person name="Church D.M."/>
            <person name="Goodstadt L."/>
            <person name="Hillier L.W."/>
            <person name="Zody M.C."/>
            <person name="Goldstein S."/>
            <person name="She X."/>
            <person name="Bult C.J."/>
            <person name="Agarwala R."/>
            <person name="Cherry J.L."/>
            <person name="DiCuccio M."/>
            <person name="Hlavina W."/>
            <person name="Kapustin Y."/>
            <person name="Meric P."/>
            <person name="Maglott D."/>
            <person name="Birtle Z."/>
            <person name="Marques A.C."/>
            <person name="Graves T."/>
            <person name="Zhou S."/>
            <person name="Teague B."/>
            <person name="Potamousis K."/>
            <person name="Churas C."/>
            <person name="Place M."/>
            <person name="Herschleb J."/>
            <person name="Runnheim R."/>
            <person name="Forrest D."/>
            <person name="Amos-Landgraf J."/>
            <person name="Schwartz D.C."/>
            <person name="Cheng Z."/>
            <person name="Lindblad-Toh K."/>
            <person name="Eichler E.E."/>
            <person name="Ponting C.P."/>
        </authorList>
    </citation>
    <scope>NUCLEOTIDE SEQUENCE [LARGE SCALE GENOMIC DNA]</scope>
    <source>
        <strain>C57BL/6J</strain>
    </source>
</reference>
<reference key="3">
    <citation type="journal article" date="2004" name="Genome Res.">
        <title>The status, quality, and expansion of the NIH full-length cDNA project: the Mammalian Gene Collection (MGC).</title>
        <authorList>
            <consortium name="The MGC Project Team"/>
        </authorList>
    </citation>
    <scope>NUCLEOTIDE SEQUENCE [LARGE SCALE MRNA]</scope>
    <source>
        <strain>C57BL/6J</strain>
        <tissue>Brain</tissue>
    </source>
</reference>
<reference key="4">
    <citation type="journal article" date="1989" name="Gene">
        <title>The application of the polymerase chain reaction to cloning members of the protein tyrosine kinase family.</title>
        <authorList>
            <person name="Wilks A.F."/>
            <person name="Kurban R.R."/>
            <person name="Hovens C.M."/>
            <person name="Ralph S.J."/>
        </authorList>
    </citation>
    <scope>NUCLEOTIDE SEQUENCE [MRNA] OF 973-1043</scope>
</reference>
<reference key="5">
    <citation type="journal article" date="1989" name="Proc. Natl. Acad. Sci. U.S.A.">
        <title>Two putative protein-tyrosine kinases identified by application of the polymerase chain reaction.</title>
        <authorList>
            <person name="Wilks A.F."/>
        </authorList>
    </citation>
    <scope>NUCLEOTIDE SEQUENCE [MRNA] OF 973-1043</scope>
</reference>
<reference key="6">
    <citation type="journal article" date="1993" name="Cell">
        <title>JAK2 associates with the erythropoietin receptor and is tyrosine phosphorylated and activated following stimulation with erythropoietin.</title>
        <authorList>
            <person name="Witthuhn B.A."/>
            <person name="Quelle F.W."/>
            <person name="Silvennoinen O."/>
            <person name="Yi T."/>
            <person name="Tang B."/>
            <person name="Miura O."/>
            <person name="Ihle J.N."/>
        </authorList>
    </citation>
    <scope>FUNCTION</scope>
    <scope>INTERACTION WITH EPOR</scope>
    <scope>PHOSPHORYLATION</scope>
    <scope>ACTIVITY REGULATION</scope>
</reference>
<reference key="7">
    <citation type="journal article" date="1995" name="J. Biol. Chem.">
        <title>The amino-terminal portion of the JAK2 protein kinase is necessary for binding and phosphorylation of the granulocyte-macrophage colony-stimulating factor receptor beta c chain.</title>
        <authorList>
            <person name="Zhao Y."/>
            <person name="Wagner F."/>
            <person name="Frank S.J."/>
            <person name="Kraft A.S."/>
        </authorList>
    </citation>
    <scope>INTERACTION WITH CYTOKINE/INTERFERON/GROWTH HORMONE RECEPTORS</scope>
</reference>
<reference key="8">
    <citation type="journal article" date="1996" name="J. Biol. Chem.">
        <title>An epidermal growth factor receptor/Jak2 tyrosine kinase domain chimera induces tyrosine phosphorylation of Stat5 and transduces a growth signal in hematopoietic cells.</title>
        <authorList>
            <person name="Nakamura N."/>
            <person name="Chin H."/>
            <person name="Miyasaka N."/>
            <person name="Miura O."/>
        </authorList>
    </citation>
    <scope>FUNCTION IN PHOSPHORYLATION OF STAT5A AND STAT5B</scope>
</reference>
<reference key="9">
    <citation type="journal article" date="1998" name="Blood">
        <title>Tec and Jak2 kinases cooperate to mediate cytokine-driven activation of c-fos transcription.</title>
        <authorList>
            <person name="Yamashita Y."/>
            <person name="Watanabe S."/>
            <person name="Miyazato A."/>
            <person name="Ohya K."/>
            <person name="Ikeda U."/>
            <person name="Shimada K."/>
            <person name="Komatsu N."/>
            <person name="Hatake K."/>
            <person name="Miura Y."/>
            <person name="Ozawa K."/>
            <person name="Mano H."/>
        </authorList>
    </citation>
    <scope>FUNCTION</scope>
    <scope>INTERACTION WITH TEC</scope>
    <scope>PHOSPHORYLATION AT TYR-1007 BY TEC</scope>
</reference>
<reference key="10">
    <citation type="journal article" date="1998" name="Blood">
        <title>Lyn physically associates with the erythropoietin receptor and may play a role in activation of the Stat5 pathway.</title>
        <authorList>
            <person name="Chin H."/>
            <person name="Arai A."/>
            <person name="Wakao H."/>
            <person name="Kamiyama R."/>
            <person name="Miyasaka N."/>
            <person name="Miura O."/>
        </authorList>
    </citation>
    <scope>INTERACTION WITH LYN</scope>
</reference>
<reference key="11">
    <citation type="journal article" date="1998" name="Cell">
        <title>Jak2 is essential for signaling through a variety of cytokine receptors.</title>
        <authorList>
            <person name="Parganas E."/>
            <person name="Wang D."/>
            <person name="Stravopodis D."/>
            <person name="Topham D.J."/>
            <person name="Marine J.C."/>
            <person name="Teglund S."/>
            <person name="Vanin E.F."/>
            <person name="Bodner S."/>
            <person name="Colamonici O.R."/>
            <person name="van Deursen J.M."/>
            <person name="Grosveld G."/>
            <person name="Ihle J.N."/>
        </authorList>
    </citation>
    <scope>FUNCTION</scope>
    <scope>DISRUPTION PHENOTYPE</scope>
</reference>
<reference key="12">
    <citation type="journal article" date="1998" name="Cell">
        <title>Jak2 deficiency defines an essential developmental checkpoint in definitive hematopoiesis.</title>
        <authorList>
            <person name="Neubauer H."/>
            <person name="Cumano A."/>
            <person name="Muller M."/>
            <person name="Wu H."/>
            <person name="Huffstadt U."/>
            <person name="Pfeffer K."/>
        </authorList>
    </citation>
    <scope>FUNCTION</scope>
    <scope>DISRUPTION PHENOTYPE</scope>
</reference>
<reference key="13">
    <citation type="journal article" date="2009" name="Immunity">
        <title>The phagosomal proteome in interferon-gamma-activated macrophages.</title>
        <authorList>
            <person name="Trost M."/>
            <person name="English L."/>
            <person name="Lemieux S."/>
            <person name="Courcelles M."/>
            <person name="Desjardins M."/>
            <person name="Thibault P."/>
        </authorList>
    </citation>
    <scope>PHOSPHORYLATION [LARGE SCALE ANALYSIS] AT SER-523</scope>
    <scope>IDENTIFICATION BY MASS SPECTROMETRY [LARGE SCALE ANALYSIS]</scope>
</reference>
<reference key="14">
    <citation type="journal article" date="2010" name="Cell">
        <title>A tissue-specific atlas of mouse protein phosphorylation and expression.</title>
        <authorList>
            <person name="Huttlin E.L."/>
            <person name="Jedrychowski M.P."/>
            <person name="Elias J.E."/>
            <person name="Goswami T."/>
            <person name="Rad R."/>
            <person name="Beausoleil S.A."/>
            <person name="Villen J."/>
            <person name="Haas W."/>
            <person name="Sowa M.E."/>
            <person name="Gygi S.P."/>
        </authorList>
    </citation>
    <scope>PHOSPHORYLATION [LARGE SCALE ANALYSIS] AT SER-523</scope>
    <scope>IDENTIFICATION BY MASS SPECTROMETRY [LARGE SCALE ANALYSIS]</scope>
    <source>
        <tissue>Lung</tissue>
        <tissue>Pancreas</tissue>
        <tissue>Spleen</tissue>
    </source>
</reference>
<reference key="15">
    <citation type="journal article" date="2010" name="Nat. Med.">
        <title>The Rho exchange factor Arhgef1 mediates the effects of angiotensin II on vascular tone and blood pressure.</title>
        <authorList>
            <person name="Guilluy C."/>
            <person name="Bregeon J."/>
            <person name="Toumaniantz G."/>
            <person name="Rolli-Derkinderen M."/>
            <person name="Retailleau K."/>
            <person name="Loufrani L."/>
            <person name="Henrion D."/>
            <person name="Scalbert E."/>
            <person name="Bril A."/>
            <person name="Torres R.M."/>
            <person name="Offermanns S."/>
            <person name="Pacaud P."/>
            <person name="Loirand G."/>
        </authorList>
    </citation>
    <scope>FUNCTION</scope>
</reference>
<reference key="16">
    <citation type="journal article" date="2000" name="J. Biol. Chem.">
        <title>Negative regulation of growth hormone receptor/JAK2 signaling by signal regulatory protein alpha.</title>
        <authorList>
            <person name="Stofega M.R."/>
            <person name="Argetsinger L.S."/>
            <person name="Wang H."/>
            <person name="Ullrich A."/>
            <person name="Carter-Su C."/>
        </authorList>
    </citation>
    <scope>INTERACTION WITH SIRPA</scope>
</reference>
<reference key="17">
    <citation type="journal article" date="2001" name="Mol. Cell">
        <title>The N-terminal domain of Janus kinase 2 is required for Golgi processing and cell surface expression of erythropoietin receptor.</title>
        <authorList>
            <person name="Huang L.J."/>
            <person name="Constantinescu S.N."/>
            <person name="Lodish H.F."/>
        </authorList>
    </citation>
    <scope>FUNCTION</scope>
    <scope>INTERACTION WITH EPOR</scope>
</reference>
<reference key="18">
    <citation type="journal article" date="2002" name="Mol. Endocrinol.">
        <title>Identification of the critical sequence elements in the cytoplasmic domain of leptin receptor isoforms required for Janus kinase/signal transducer and activator of transcription activation by receptor heterodimers.</title>
        <authorList>
            <person name="Bahrenberg G."/>
            <person name="Behrmann I."/>
            <person name="Barthel A."/>
            <person name="Hekerman P."/>
            <person name="Heinrich P.C."/>
            <person name="Joost H.G."/>
            <person name="Becker W."/>
        </authorList>
    </citation>
    <scope>INTERACTION WITH LEPR</scope>
</reference>
<reference key="19">
    <citation type="journal article" date="2006" name="EMBO J.">
        <title>Receptor specific downregulation of cytokine signaling by autophosphorylation in the FERM domain of Jak2.</title>
        <authorList>
            <person name="Funakoshi-Tago M."/>
            <person name="Pelletier S."/>
            <person name="Matsuda T."/>
            <person name="Parganas E."/>
            <person name="Ihle J.N."/>
        </authorList>
    </citation>
    <scope>PHOSPHORYLATION AT TYR-119</scope>
    <scope>MUTAGENESIS OF TYR-119</scope>
</reference>
<reference key="20">
    <citation type="journal article" date="2007" name="Mol. Endocrinol.">
        <title>SH2B1 enhances leptin signaling by both Janus kinase 2 Tyr813 phosphorylation-dependent and -independent mechanisms.</title>
        <authorList>
            <person name="Li Z."/>
            <person name="Zhou Y."/>
            <person name="Carter-Su C."/>
            <person name="Myers M.G. Jr."/>
            <person name="Rui L."/>
        </authorList>
    </citation>
    <scope>INTERACTION WITH SH2B1</scope>
    <scope>PHOSPHORYLATION AT TYR-813</scope>
</reference>
<reference key="21">
    <citation type="journal article" date="2010" name="Mol. Endocrinol.">
        <title>Tyrosines 868, 966, and 972 in the kinase domain of JAK2 are autophosphorylated and required for maximal JAK2 kinase activity.</title>
        <authorList>
            <person name="Argetsinger L.S."/>
            <person name="Stuckey J.A."/>
            <person name="Robertson S.A."/>
            <person name="Koleva R.I."/>
            <person name="Cline J.M."/>
            <person name="Marto J.A."/>
            <person name="Myers M.G. Jr."/>
            <person name="Carter-Su C."/>
        </authorList>
    </citation>
    <scope>PHOSPHORYLATION AT TYR-868; TYR-966; TYR-972 AND TYR-1008</scope>
    <scope>MUTAGENESIS OF TYR-868; TYR-966; TYR-972 AND TYR-1008</scope>
    <scope>ACTIVITY REGULATION</scope>
    <scope>CATALYTIC ACTIVITY</scope>
</reference>
<reference key="22">
    <citation type="journal article" date="2011" name="Cell. Signal.">
        <title>Phosphorylation of Y372 is critical for Jak2 tyrosine kinase activation.</title>
        <authorList>
            <person name="Sayyah J."/>
            <person name="Gnanasambandan K."/>
            <person name="Kamarajugudda S."/>
            <person name="Tsuda S."/>
            <person name="Caldwell-Busby J."/>
            <person name="Sayeski P.P."/>
        </authorList>
    </citation>
    <scope>PHOSPHORYLATION AT TYR-372 AND TYR-373</scope>
    <scope>MUTAGENESIS OF TYR-372 AND TYR-373</scope>
    <scope>ACTIVITY REGULATION</scope>
    <scope>CATALYTIC ACTIVITY</scope>
</reference>
<reference key="23">
    <citation type="journal article" date="2011" name="Proc. Natl. Acad. Sci. U.S.A.">
        <title>Signaling by vitamin A and retinol-binding protein regulates gene expression to inhibit insulin responses.</title>
        <authorList>
            <person name="Berry D.C."/>
            <person name="Jin H."/>
            <person name="Majumdar A."/>
            <person name="Noy N."/>
        </authorList>
    </citation>
    <scope>FUNCTION</scope>
    <scope>PHOSPHORYLATION</scope>
</reference>
<reference key="24">
    <citation type="journal article" date="2011" name="Oncogene">
        <title>Phosphorylation of p27Kip1 by JAK2 directly links cytokine receptor signaling to cell cycle control.</title>
        <authorList>
            <person name="Jakel H."/>
            <person name="Weinl C."/>
            <person name="Hengst L."/>
        </authorList>
    </citation>
    <scope>FUNCTION IN PHOSPHORYLATION OF CDKN1B</scope>
</reference>
<reference key="25">
    <citation type="journal article" date="2007" name="Curr. Opin. Genet. Dev.">
        <title>Jak2: normal function and role in hematopoietic disorders.</title>
        <authorList>
            <person name="Ihle J.N."/>
            <person name="Gilliland D.G."/>
        </authorList>
    </citation>
    <scope>REVIEW ON FUNCTION</scope>
</reference>
<reference key="26">
    <citation type="journal article" date="2006" name="J. Mol. Biol.">
        <title>Structural basis for phosphotyrosine recognition by the Src homology-2 domains of the adapter proteins SH2-B and APS.</title>
        <authorList>
            <person name="Hu J."/>
            <person name="Hubbard S.R."/>
        </authorList>
    </citation>
    <scope>X-RAY CRYSTALLOGRAPHY (2.35 ANGSTROMS) OF 810-820 IN COMPLEX WITH SH2B1</scope>
    <scope>PHOSPHORYLATION AT TYR-813</scope>
</reference>